<dbReference type="EMBL" id="CU928161">
    <property type="protein sequence ID" value="CAR04912.1"/>
    <property type="molecule type" value="Genomic_DNA"/>
</dbReference>
<dbReference type="RefSeq" id="WP_001096200.1">
    <property type="nucleotide sequence ID" value="NC_011742.1"/>
</dbReference>
<dbReference type="EMDB" id="EMD-7970"/>
<dbReference type="EMDB" id="EMD-8826"/>
<dbReference type="EMDB" id="EMD-8829"/>
<dbReference type="SMR" id="B7MCS3"/>
<dbReference type="IntAct" id="B7MCS3">
    <property type="interactions" value="1"/>
</dbReference>
<dbReference type="GeneID" id="93778679"/>
<dbReference type="KEGG" id="ecz:ECS88_3695"/>
<dbReference type="HOGENOM" id="CLU_061015_2_1_6"/>
<dbReference type="Proteomes" id="UP000000747">
    <property type="component" value="Chromosome"/>
</dbReference>
<dbReference type="GO" id="GO:1990904">
    <property type="term" value="C:ribonucleoprotein complex"/>
    <property type="evidence" value="ECO:0007669"/>
    <property type="project" value="UniProtKB-KW"/>
</dbReference>
<dbReference type="GO" id="GO:0005840">
    <property type="term" value="C:ribosome"/>
    <property type="evidence" value="ECO:0007669"/>
    <property type="project" value="UniProtKB-KW"/>
</dbReference>
<dbReference type="GO" id="GO:0019843">
    <property type="term" value="F:rRNA binding"/>
    <property type="evidence" value="ECO:0007669"/>
    <property type="project" value="UniProtKB-UniRule"/>
</dbReference>
<dbReference type="GO" id="GO:0003735">
    <property type="term" value="F:structural constituent of ribosome"/>
    <property type="evidence" value="ECO:0007669"/>
    <property type="project" value="InterPro"/>
</dbReference>
<dbReference type="GO" id="GO:0000049">
    <property type="term" value="F:tRNA binding"/>
    <property type="evidence" value="ECO:0007669"/>
    <property type="project" value="UniProtKB-UniRule"/>
</dbReference>
<dbReference type="GO" id="GO:0006412">
    <property type="term" value="P:translation"/>
    <property type="evidence" value="ECO:0007669"/>
    <property type="project" value="UniProtKB-UniRule"/>
</dbReference>
<dbReference type="FunFam" id="3.30.1440.10:FF:000001">
    <property type="entry name" value="50S ribosomal protein L5"/>
    <property type="match status" value="1"/>
</dbReference>
<dbReference type="Gene3D" id="3.30.1440.10">
    <property type="match status" value="1"/>
</dbReference>
<dbReference type="HAMAP" id="MF_01333_B">
    <property type="entry name" value="Ribosomal_uL5_B"/>
    <property type="match status" value="1"/>
</dbReference>
<dbReference type="InterPro" id="IPR002132">
    <property type="entry name" value="Ribosomal_uL5"/>
</dbReference>
<dbReference type="InterPro" id="IPR020930">
    <property type="entry name" value="Ribosomal_uL5_bac-type"/>
</dbReference>
<dbReference type="InterPro" id="IPR031309">
    <property type="entry name" value="Ribosomal_uL5_C"/>
</dbReference>
<dbReference type="InterPro" id="IPR020929">
    <property type="entry name" value="Ribosomal_uL5_CS"/>
</dbReference>
<dbReference type="InterPro" id="IPR022803">
    <property type="entry name" value="Ribosomal_uL5_dom_sf"/>
</dbReference>
<dbReference type="InterPro" id="IPR031310">
    <property type="entry name" value="Ribosomal_uL5_N"/>
</dbReference>
<dbReference type="NCBIfam" id="NF000585">
    <property type="entry name" value="PRK00010.1"/>
    <property type="match status" value="1"/>
</dbReference>
<dbReference type="PANTHER" id="PTHR11994">
    <property type="entry name" value="60S RIBOSOMAL PROTEIN L11-RELATED"/>
    <property type="match status" value="1"/>
</dbReference>
<dbReference type="Pfam" id="PF00281">
    <property type="entry name" value="Ribosomal_L5"/>
    <property type="match status" value="1"/>
</dbReference>
<dbReference type="Pfam" id="PF00673">
    <property type="entry name" value="Ribosomal_L5_C"/>
    <property type="match status" value="1"/>
</dbReference>
<dbReference type="PIRSF" id="PIRSF002161">
    <property type="entry name" value="Ribosomal_L5"/>
    <property type="match status" value="1"/>
</dbReference>
<dbReference type="SUPFAM" id="SSF55282">
    <property type="entry name" value="RL5-like"/>
    <property type="match status" value="1"/>
</dbReference>
<dbReference type="PROSITE" id="PS00358">
    <property type="entry name" value="RIBOSOMAL_L5"/>
    <property type="match status" value="1"/>
</dbReference>
<accession>B7MCS3</accession>
<name>RL5_ECO45</name>
<protein>
    <recommendedName>
        <fullName evidence="1">Large ribosomal subunit protein uL5</fullName>
    </recommendedName>
    <alternativeName>
        <fullName evidence="2">50S ribosomal protein L5</fullName>
    </alternativeName>
</protein>
<evidence type="ECO:0000255" key="1">
    <source>
        <dbReference type="HAMAP-Rule" id="MF_01333"/>
    </source>
</evidence>
<evidence type="ECO:0000305" key="2"/>
<keyword id="KW-0007">Acetylation</keyword>
<keyword id="KW-1185">Reference proteome</keyword>
<keyword id="KW-0687">Ribonucleoprotein</keyword>
<keyword id="KW-0689">Ribosomal protein</keyword>
<keyword id="KW-0694">RNA-binding</keyword>
<keyword id="KW-0699">rRNA-binding</keyword>
<keyword id="KW-0820">tRNA-binding</keyword>
<reference key="1">
    <citation type="journal article" date="2009" name="PLoS Genet.">
        <title>Organised genome dynamics in the Escherichia coli species results in highly diverse adaptive paths.</title>
        <authorList>
            <person name="Touchon M."/>
            <person name="Hoede C."/>
            <person name="Tenaillon O."/>
            <person name="Barbe V."/>
            <person name="Baeriswyl S."/>
            <person name="Bidet P."/>
            <person name="Bingen E."/>
            <person name="Bonacorsi S."/>
            <person name="Bouchier C."/>
            <person name="Bouvet O."/>
            <person name="Calteau A."/>
            <person name="Chiapello H."/>
            <person name="Clermont O."/>
            <person name="Cruveiller S."/>
            <person name="Danchin A."/>
            <person name="Diard M."/>
            <person name="Dossat C."/>
            <person name="Karoui M.E."/>
            <person name="Frapy E."/>
            <person name="Garry L."/>
            <person name="Ghigo J.M."/>
            <person name="Gilles A.M."/>
            <person name="Johnson J."/>
            <person name="Le Bouguenec C."/>
            <person name="Lescat M."/>
            <person name="Mangenot S."/>
            <person name="Martinez-Jehanne V."/>
            <person name="Matic I."/>
            <person name="Nassif X."/>
            <person name="Oztas S."/>
            <person name="Petit M.A."/>
            <person name="Pichon C."/>
            <person name="Rouy Z."/>
            <person name="Ruf C.S."/>
            <person name="Schneider D."/>
            <person name="Tourret J."/>
            <person name="Vacherie B."/>
            <person name="Vallenet D."/>
            <person name="Medigue C."/>
            <person name="Rocha E.P.C."/>
            <person name="Denamur E."/>
        </authorList>
    </citation>
    <scope>NUCLEOTIDE SEQUENCE [LARGE SCALE GENOMIC DNA]</scope>
    <source>
        <strain>S88 / ExPEC</strain>
    </source>
</reference>
<feature type="chain" id="PRO_1000142393" description="Large ribosomal subunit protein uL5">
    <location>
        <begin position="1"/>
        <end position="179"/>
    </location>
</feature>
<feature type="modified residue" description="N6-acetyllysine" evidence="1">
    <location>
        <position position="3"/>
    </location>
</feature>
<proteinExistence type="inferred from homology"/>
<comment type="function">
    <text evidence="1">This is one of the proteins that bind and probably mediate the attachment of the 5S RNA into the large ribosomal subunit, where it forms part of the central protuberance. In the 70S ribosome it contacts protein S13 of the 30S subunit (bridge B1b), connecting the 2 subunits; this bridge is implicated in subunit movement. Contacts the P site tRNA; the 5S rRNA and some of its associated proteins might help stabilize positioning of ribosome-bound tRNAs.</text>
</comment>
<comment type="subunit">
    <text evidence="1">Part of the 50S ribosomal subunit; part of the 5S rRNA/L5/L18/L25 subcomplex. Contacts the 5S rRNA and the P site tRNA. Forms a bridge to the 30S subunit in the 70S ribosome.</text>
</comment>
<comment type="similarity">
    <text evidence="1">Belongs to the universal ribosomal protein uL5 family.</text>
</comment>
<sequence>MAKLHDYYKDEVVKKLMTEFNYNSVMQVPRVEKITLNMGVGEAIADKKLLDNAAADLAAISGQKPLITKARKSVAGFKIRQGYPIGCKVTLRGERMWEFFERLITIAVPRIRDFRGLSAKSFDGRGNYSMGVREQIIFPEIDYDKVDRVRGLDITITTTAKSDEEGRALLAAFDFPFRK</sequence>
<gene>
    <name evidence="1" type="primary">rplE</name>
    <name type="ordered locus">ECS88_3695</name>
</gene>
<organism>
    <name type="scientific">Escherichia coli O45:K1 (strain S88 / ExPEC)</name>
    <dbReference type="NCBI Taxonomy" id="585035"/>
    <lineage>
        <taxon>Bacteria</taxon>
        <taxon>Pseudomonadati</taxon>
        <taxon>Pseudomonadota</taxon>
        <taxon>Gammaproteobacteria</taxon>
        <taxon>Enterobacterales</taxon>
        <taxon>Enterobacteriaceae</taxon>
        <taxon>Escherichia</taxon>
    </lineage>
</organism>